<accession>P25439</accession>
<accession>A4V1Z7</accession>
<accession>A4V1Z8</accession>
<accession>Q9VUW5</accession>
<accession>Q9VUW6</accession>
<evidence type="ECO:0000255" key="1">
    <source>
        <dbReference type="PROSITE-ProRule" id="PRU00035"/>
    </source>
</evidence>
<evidence type="ECO:0000255" key="2">
    <source>
        <dbReference type="PROSITE-ProRule" id="PRU00541"/>
    </source>
</evidence>
<evidence type="ECO:0000255" key="3">
    <source>
        <dbReference type="PROSITE-ProRule" id="PRU00542"/>
    </source>
</evidence>
<evidence type="ECO:0000255" key="4">
    <source>
        <dbReference type="PROSITE-ProRule" id="PRU00549"/>
    </source>
</evidence>
<evidence type="ECO:0000255" key="5">
    <source>
        <dbReference type="PROSITE-ProRule" id="PRU01001"/>
    </source>
</evidence>
<evidence type="ECO:0000256" key="6">
    <source>
        <dbReference type="SAM" id="MobiDB-lite"/>
    </source>
</evidence>
<evidence type="ECO:0000269" key="7">
    <source>
    </source>
</evidence>
<evidence type="ECO:0000269" key="8">
    <source>
    </source>
</evidence>
<evidence type="ECO:0000269" key="9">
    <source>
    </source>
</evidence>
<evidence type="ECO:0000269" key="10">
    <source>
    </source>
</evidence>
<evidence type="ECO:0000269" key="11">
    <source>
    </source>
</evidence>
<evidence type="ECO:0000269" key="12">
    <source>
    </source>
</evidence>
<evidence type="ECO:0000303" key="13">
    <source ref="5"/>
</evidence>
<evidence type="ECO:0000305" key="14"/>
<name>BRM_DROME</name>
<keyword id="KW-0010">Activator</keyword>
<keyword id="KW-0025">Alternative splicing</keyword>
<keyword id="KW-0067">ATP-binding</keyword>
<keyword id="KW-0103">Bromodomain</keyword>
<keyword id="KW-0156">Chromatin regulator</keyword>
<keyword id="KW-0217">Developmental protein</keyword>
<keyword id="KW-0347">Helicase</keyword>
<keyword id="KW-0378">Hydrolase</keyword>
<keyword id="KW-0547">Nucleotide-binding</keyword>
<keyword id="KW-0539">Nucleus</keyword>
<keyword id="KW-0597">Phosphoprotein</keyword>
<keyword id="KW-1185">Reference proteome</keyword>
<keyword id="KW-0804">Transcription</keyword>
<keyword id="KW-0805">Transcription regulation</keyword>
<reference key="1">
    <citation type="journal article" date="1992" name="Cell">
        <title>Brahma: a regulator of Drosophila homeotic genes structurally related to the yeast transcriptional activator SNF2/SWI2.</title>
        <authorList>
            <person name="Tamkun J.W."/>
            <person name="Deuring R."/>
            <person name="Scott M.P."/>
            <person name="Kissinger M."/>
            <person name="Pattatucci A.M."/>
            <person name="Kaufman T.C."/>
            <person name="Kennison J.A."/>
        </authorList>
    </citation>
    <scope>NUCLEOTIDE SEQUENCE [MRNA] (ISOFORM A)</scope>
    <scope>FUNCTION</scope>
    <scope>DEVELOPMENTAL STAGE</scope>
</reference>
<reference key="2">
    <citation type="journal article" date="2000" name="Science">
        <title>The genome sequence of Drosophila melanogaster.</title>
        <authorList>
            <person name="Adams M.D."/>
            <person name="Celniker S.E."/>
            <person name="Holt R.A."/>
            <person name="Evans C.A."/>
            <person name="Gocayne J.D."/>
            <person name="Amanatides P.G."/>
            <person name="Scherer S.E."/>
            <person name="Li P.W."/>
            <person name="Hoskins R.A."/>
            <person name="Galle R.F."/>
            <person name="George R.A."/>
            <person name="Lewis S.E."/>
            <person name="Richards S."/>
            <person name="Ashburner M."/>
            <person name="Henderson S.N."/>
            <person name="Sutton G.G."/>
            <person name="Wortman J.R."/>
            <person name="Yandell M.D."/>
            <person name="Zhang Q."/>
            <person name="Chen L.X."/>
            <person name="Brandon R.C."/>
            <person name="Rogers Y.-H.C."/>
            <person name="Blazej R.G."/>
            <person name="Champe M."/>
            <person name="Pfeiffer B.D."/>
            <person name="Wan K.H."/>
            <person name="Doyle C."/>
            <person name="Baxter E.G."/>
            <person name="Helt G."/>
            <person name="Nelson C.R."/>
            <person name="Miklos G.L.G."/>
            <person name="Abril J.F."/>
            <person name="Agbayani A."/>
            <person name="An H.-J."/>
            <person name="Andrews-Pfannkoch C."/>
            <person name="Baldwin D."/>
            <person name="Ballew R.M."/>
            <person name="Basu A."/>
            <person name="Baxendale J."/>
            <person name="Bayraktaroglu L."/>
            <person name="Beasley E.M."/>
            <person name="Beeson K.Y."/>
            <person name="Benos P.V."/>
            <person name="Berman B.P."/>
            <person name="Bhandari D."/>
            <person name="Bolshakov S."/>
            <person name="Borkova D."/>
            <person name="Botchan M.R."/>
            <person name="Bouck J."/>
            <person name="Brokstein P."/>
            <person name="Brottier P."/>
            <person name="Burtis K.C."/>
            <person name="Busam D.A."/>
            <person name="Butler H."/>
            <person name="Cadieu E."/>
            <person name="Center A."/>
            <person name="Chandra I."/>
            <person name="Cherry J.M."/>
            <person name="Cawley S."/>
            <person name="Dahlke C."/>
            <person name="Davenport L.B."/>
            <person name="Davies P."/>
            <person name="de Pablos B."/>
            <person name="Delcher A."/>
            <person name="Deng Z."/>
            <person name="Mays A.D."/>
            <person name="Dew I."/>
            <person name="Dietz S.M."/>
            <person name="Dodson K."/>
            <person name="Doup L.E."/>
            <person name="Downes M."/>
            <person name="Dugan-Rocha S."/>
            <person name="Dunkov B.C."/>
            <person name="Dunn P."/>
            <person name="Durbin K.J."/>
            <person name="Evangelista C.C."/>
            <person name="Ferraz C."/>
            <person name="Ferriera S."/>
            <person name="Fleischmann W."/>
            <person name="Fosler C."/>
            <person name="Gabrielian A.E."/>
            <person name="Garg N.S."/>
            <person name="Gelbart W.M."/>
            <person name="Glasser K."/>
            <person name="Glodek A."/>
            <person name="Gong F."/>
            <person name="Gorrell J.H."/>
            <person name="Gu Z."/>
            <person name="Guan P."/>
            <person name="Harris M."/>
            <person name="Harris N.L."/>
            <person name="Harvey D.A."/>
            <person name="Heiman T.J."/>
            <person name="Hernandez J.R."/>
            <person name="Houck J."/>
            <person name="Hostin D."/>
            <person name="Houston K.A."/>
            <person name="Howland T.J."/>
            <person name="Wei M.-H."/>
            <person name="Ibegwam C."/>
            <person name="Jalali M."/>
            <person name="Kalush F."/>
            <person name="Karpen G.H."/>
            <person name="Ke Z."/>
            <person name="Kennison J.A."/>
            <person name="Ketchum K.A."/>
            <person name="Kimmel B.E."/>
            <person name="Kodira C.D."/>
            <person name="Kraft C.L."/>
            <person name="Kravitz S."/>
            <person name="Kulp D."/>
            <person name="Lai Z."/>
            <person name="Lasko P."/>
            <person name="Lei Y."/>
            <person name="Levitsky A.A."/>
            <person name="Li J.H."/>
            <person name="Li Z."/>
            <person name="Liang Y."/>
            <person name="Lin X."/>
            <person name="Liu X."/>
            <person name="Mattei B."/>
            <person name="McIntosh T.C."/>
            <person name="McLeod M.P."/>
            <person name="McPherson D."/>
            <person name="Merkulov G."/>
            <person name="Milshina N.V."/>
            <person name="Mobarry C."/>
            <person name="Morris J."/>
            <person name="Moshrefi A."/>
            <person name="Mount S.M."/>
            <person name="Moy M."/>
            <person name="Murphy B."/>
            <person name="Murphy L."/>
            <person name="Muzny D.M."/>
            <person name="Nelson D.L."/>
            <person name="Nelson D.R."/>
            <person name="Nelson K.A."/>
            <person name="Nixon K."/>
            <person name="Nusskern D.R."/>
            <person name="Pacleb J.M."/>
            <person name="Palazzolo M."/>
            <person name="Pittman G.S."/>
            <person name="Pan S."/>
            <person name="Pollard J."/>
            <person name="Puri V."/>
            <person name="Reese M.G."/>
            <person name="Reinert K."/>
            <person name="Remington K."/>
            <person name="Saunders R.D.C."/>
            <person name="Scheeler F."/>
            <person name="Shen H."/>
            <person name="Shue B.C."/>
            <person name="Siden-Kiamos I."/>
            <person name="Simpson M."/>
            <person name="Skupski M.P."/>
            <person name="Smith T.J."/>
            <person name="Spier E."/>
            <person name="Spradling A.C."/>
            <person name="Stapleton M."/>
            <person name="Strong R."/>
            <person name="Sun E."/>
            <person name="Svirskas R."/>
            <person name="Tector C."/>
            <person name="Turner R."/>
            <person name="Venter E."/>
            <person name="Wang A.H."/>
            <person name="Wang X."/>
            <person name="Wang Z.-Y."/>
            <person name="Wassarman D.A."/>
            <person name="Weinstock G.M."/>
            <person name="Weissenbach J."/>
            <person name="Williams S.M."/>
            <person name="Woodage T."/>
            <person name="Worley K.C."/>
            <person name="Wu D."/>
            <person name="Yang S."/>
            <person name="Yao Q.A."/>
            <person name="Ye J."/>
            <person name="Yeh R.-F."/>
            <person name="Zaveri J.S."/>
            <person name="Zhan M."/>
            <person name="Zhang G."/>
            <person name="Zhao Q."/>
            <person name="Zheng L."/>
            <person name="Zheng X.H."/>
            <person name="Zhong F.N."/>
            <person name="Zhong W."/>
            <person name="Zhou X."/>
            <person name="Zhu S.C."/>
            <person name="Zhu X."/>
            <person name="Smith H.O."/>
            <person name="Gibbs R.A."/>
            <person name="Myers E.W."/>
            <person name="Rubin G.M."/>
            <person name="Venter J.C."/>
        </authorList>
    </citation>
    <scope>NUCLEOTIDE SEQUENCE [LARGE SCALE GENOMIC DNA]</scope>
    <source>
        <strain>Berkeley</strain>
    </source>
</reference>
<reference key="3">
    <citation type="journal article" date="2002" name="Genome Biol.">
        <title>Annotation of the Drosophila melanogaster euchromatic genome: a systematic review.</title>
        <authorList>
            <person name="Misra S."/>
            <person name="Crosby M.A."/>
            <person name="Mungall C.J."/>
            <person name="Matthews B.B."/>
            <person name="Campbell K.S."/>
            <person name="Hradecky P."/>
            <person name="Huang Y."/>
            <person name="Kaminker J.S."/>
            <person name="Millburn G.H."/>
            <person name="Prochnik S.E."/>
            <person name="Smith C.D."/>
            <person name="Tupy J.L."/>
            <person name="Whitfield E.J."/>
            <person name="Bayraktaroglu L."/>
            <person name="Berman B.P."/>
            <person name="Bettencourt B.R."/>
            <person name="Celniker S.E."/>
            <person name="de Grey A.D.N.J."/>
            <person name="Drysdale R.A."/>
            <person name="Harris N.L."/>
            <person name="Richter J."/>
            <person name="Russo S."/>
            <person name="Schroeder A.J."/>
            <person name="Shu S.Q."/>
            <person name="Stapleton M."/>
            <person name="Yamada C."/>
            <person name="Ashburner M."/>
            <person name="Gelbart W.M."/>
            <person name="Rubin G.M."/>
            <person name="Lewis S.E."/>
        </authorList>
    </citation>
    <scope>GENOME REANNOTATION</scope>
    <scope>ALTERNATIVE SPLICING</scope>
    <source>
        <strain>Berkeley</strain>
    </source>
</reference>
<reference key="4">
    <citation type="journal article" date="2002" name="Genome Biol.">
        <title>A Drosophila full-length cDNA resource.</title>
        <authorList>
            <person name="Stapleton M."/>
            <person name="Carlson J.W."/>
            <person name="Brokstein P."/>
            <person name="Yu C."/>
            <person name="Champe M."/>
            <person name="George R.A."/>
            <person name="Guarin H."/>
            <person name="Kronmiller B."/>
            <person name="Pacleb J.M."/>
            <person name="Park S."/>
            <person name="Wan K.H."/>
            <person name="Rubin G.M."/>
            <person name="Celniker S.E."/>
        </authorList>
    </citation>
    <scope>NUCLEOTIDE SEQUENCE [LARGE SCALE MRNA] (ISOFORM A)</scope>
    <source>
        <strain>Berkeley</strain>
        <tissue>Embryo</tissue>
    </source>
</reference>
<reference key="5">
    <citation type="submission" date="2003-08" db="EMBL/GenBank/DDBJ databases">
        <authorList>
            <person name="Stapleton M."/>
            <person name="Brokstein P."/>
            <person name="Hong L."/>
            <person name="Agbayani A."/>
            <person name="Carlson J.W."/>
            <person name="Champe M."/>
            <person name="Chavez C."/>
            <person name="Dorsett V."/>
            <person name="Dresnek D."/>
            <person name="Farfan D."/>
            <person name="Frise E."/>
            <person name="George R.A."/>
            <person name="Gonzalez M."/>
            <person name="Guarin H."/>
            <person name="Kronmiller B."/>
            <person name="Li P.W."/>
            <person name="Liao G."/>
            <person name="Miranda A."/>
            <person name="Mungall C.J."/>
            <person name="Nunoo J."/>
            <person name="Pacleb J.M."/>
            <person name="Paragas V."/>
            <person name="Park S."/>
            <person name="Patel S."/>
            <person name="Phouanenavong S."/>
            <person name="Wan K.H."/>
            <person name="Yu C."/>
            <person name="Lewis S.E."/>
            <person name="Rubin G.M."/>
            <person name="Celniker S.E."/>
        </authorList>
    </citation>
    <scope>NUCLEOTIDE SEQUENCE [LARGE SCALE MRNA] (ISOFORM C)</scope>
    <source>
        <strain>Berkeley</strain>
        <tissue>Embryo</tissue>
    </source>
</reference>
<reference key="6">
    <citation type="journal article" date="1999" name="EMBO J.">
        <title>Osa associates with the Brahma chromatin remodeling complex and promotes the activation of some target genes.</title>
        <authorList>
            <person name="Collins R.T."/>
            <person name="Furukawa T."/>
            <person name="Tanese N."/>
            <person name="Treisman J.E."/>
        </authorList>
    </citation>
    <scope>IDENTIFICATION IN A BRAHMA COMPLEX WITH OSA AND SNR1</scope>
</reference>
<reference key="7">
    <citation type="journal article" date="2000" name="Genes Dev.">
        <title>The Drosophila brahma complex is an essential coactivator for the trithorax group protein zeste.</title>
        <authorList>
            <person name="Kal A.J."/>
            <person name="Mahmoudi T."/>
            <person name="Zak N.B."/>
            <person name="Verrijzer C.P."/>
        </authorList>
    </citation>
    <scope>FUNCTION AS COACTIVATOR</scope>
    <scope>IDENTIFICATION IN A BRAHMA COMPLEX WITH OSA; MOR; SNR1; DALAO; BAP55; BAP60 AND ACT42A</scope>
</reference>
<reference key="8">
    <citation type="journal article" date="2002" name="Genes Dev.">
        <title>Histone chaperone ASF1 cooperates with the Brahma chromatin-remodelling machinery.</title>
        <authorList>
            <person name="Moshkin Y.M."/>
            <person name="Armstrong J.A."/>
            <person name="Maeda R.K."/>
            <person name="Tamkun J.W."/>
            <person name="Verrijzer P."/>
            <person name="Kennison J.A."/>
            <person name="Karch F."/>
        </authorList>
    </citation>
    <scope>INTERACTION WITH ASF1</scope>
</reference>
<reference key="9">
    <citation type="journal article" date="2014" name="Elife">
        <title>The Brm-HDAC3-Erm repressor complex suppresses dedifferentiation in Drosophila type II neuroblast lineages.</title>
        <authorList>
            <person name="Koe C.T."/>
            <person name="Li S."/>
            <person name="Rossi F."/>
            <person name="Wong J.J."/>
            <person name="Wang Y."/>
            <person name="Zhang Z."/>
            <person name="Chen K."/>
            <person name="Aw S.S."/>
            <person name="Richardson H.E."/>
            <person name="Robson P."/>
            <person name="Sung W.K."/>
            <person name="Yu F."/>
            <person name="Gonzalez C."/>
            <person name="Wang H."/>
        </authorList>
    </citation>
    <scope>FUNCTION</scope>
    <scope>IDENTIFICATION IN THE BRM-HDAC3-ERM COMPLEX</scope>
    <scope>INTERACTION WITH ERM AND HDAC3</scope>
    <scope>DISRUPTION PHENOTYPE</scope>
</reference>
<reference key="10">
    <citation type="journal article" date="2008" name="J. Proteome Res.">
        <title>Phosphoproteome analysis of Drosophila melanogaster embryos.</title>
        <authorList>
            <person name="Zhai B."/>
            <person name="Villen J."/>
            <person name="Beausoleil S.A."/>
            <person name="Mintseris J."/>
            <person name="Gygi S.P."/>
        </authorList>
    </citation>
    <scope>PHOSPHORYLATION [LARGE SCALE ANALYSIS] AT SER-695; SER-698; SER-1407; SER-1411; SER-1591 AND SER-1594</scope>
    <scope>IDENTIFICATION BY MASS SPECTROMETRY</scope>
    <source>
        <tissue>Embryo</tissue>
    </source>
</reference>
<protein>
    <recommendedName>
        <fullName>ATP-dependent helicase brm</fullName>
        <ecNumber>3.6.4.12</ecNumber>
    </recommendedName>
    <alternativeName>
        <fullName>Homeotic gene regulator</fullName>
    </alternativeName>
    <alternativeName>
        <fullName>Protein brahma</fullName>
    </alternativeName>
</protein>
<comment type="function">
    <text evidence="8 10 12">Transcriptional regulator (PubMed:1346755). Acts as a coactivator, assisting one or more dedicated transcriptional activators of ANTC and BXC homeotic gene clusters (PubMed:1346755). Can counteract the repressive effect of Polycomb protein (PubMed:1346755). ATPase subunit of the Brahma complex, a multiprotein complex which is the equivalent of the yeast SWI/SNF complex and acts by remodeling the chromatin by catalyzing an ATP-dependent alteration in the structure of nucleosomal DNA (PubMed:1346755). This complex can both serve as a transcriptional coactivator or corepressor, depending on the context (PubMed:10809665). In type II neuroblast lineage, as part of the Brm remodeling complex, suppresses the formation of ectopic neuroblasts probably through interaction with erm and HDAC3 (PubMed:24618901).</text>
</comment>
<comment type="catalytic activity">
    <reaction>
        <text>ATP + H2O = ADP + phosphate + H(+)</text>
        <dbReference type="Rhea" id="RHEA:13065"/>
        <dbReference type="ChEBI" id="CHEBI:15377"/>
        <dbReference type="ChEBI" id="CHEBI:15378"/>
        <dbReference type="ChEBI" id="CHEBI:30616"/>
        <dbReference type="ChEBI" id="CHEBI:43474"/>
        <dbReference type="ChEBI" id="CHEBI:456216"/>
        <dbReference type="EC" id="3.6.4.12"/>
    </reaction>
</comment>
<comment type="subunit">
    <text evidence="7 8 9 12">Component of the Brahma complex, which is composed of brm, osa, mor, Snr1/Bap45, dalao/Bap111, Bap55, Bap60 and Act42A/Bap47 (PubMed:10601025, PubMed:10809665). Interacts with asf1 (PubMed:12381660). Associates with the brm-HDAC3-erm repressor complex, composed of brm, HDAC3 and erm (PubMed:24618901). Interacts with erm and HDAC3 (PubMed:24618901).</text>
</comment>
<comment type="interaction">
    <interactant intactId="EBI-868480">
        <id>P25439</id>
    </interactant>
    <interactant intactId="EBI-132623">
        <id>Q9VF03</id>
        <label>mor</label>
    </interactant>
    <organismsDiffer>false</organismsDiffer>
    <experiments>6</experiments>
</comment>
<comment type="interaction">
    <interactant intactId="EBI-868480">
        <id>P25439</id>
    </interactant>
    <interactant intactId="EBI-115993">
        <id>Q8IN94</id>
        <label>osa</label>
    </interactant>
    <organismsDiffer>false</organismsDiffer>
    <experiments>5</experiments>
</comment>
<comment type="interaction">
    <interactant intactId="EBI-868480">
        <id>P25439</id>
    </interactant>
    <interactant intactId="EBI-151570">
        <id>Q24090</id>
        <label>Snr1</label>
    </interactant>
    <organismsDiffer>false</organismsDiffer>
    <experiments>5</experiments>
</comment>
<comment type="subcellular location">
    <subcellularLocation>
        <location>Nucleus</location>
    </subcellularLocation>
</comment>
<comment type="alternative products">
    <event type="alternative splicing"/>
    <isoform>
        <id>P25439-1</id>
        <name>A</name>
        <name>B</name>
        <sequence type="displayed"/>
    </isoform>
    <isoform>
        <id>P25439-2</id>
        <name>C</name>
        <name>D</name>
        <sequence type="described" ref="VSP_000555"/>
    </isoform>
</comment>
<comment type="developmental stage">
    <text evidence="10">Highest expression in unfertilized eggs and early embryos.</text>
</comment>
<comment type="disruption phenotype">
    <text evidence="12">RNAi-mediated knockdown in larval brains results in the formation of ectopic neuroblasts in type II neuroblast lineage. Simultaneous RNAi-mediated knockdown of HDAC3 or erm in type II neuroblasts results in a more severe phenotype of ectopic neuroblasts.</text>
</comment>
<comment type="miscellaneous">
    <text>'Brahma' means 'fate' in India.</text>
</comment>
<dbReference type="EC" id="3.6.4.12"/>
<dbReference type="EMBL" id="M85049">
    <property type="protein sequence ID" value="AAA19661.1"/>
    <property type="molecule type" value="mRNA"/>
</dbReference>
<dbReference type="EMBL" id="AE014296">
    <property type="protein sequence ID" value="AAF49557.1"/>
    <property type="molecule type" value="Genomic_DNA"/>
</dbReference>
<dbReference type="EMBL" id="AE014296">
    <property type="protein sequence ID" value="AAF49558.3"/>
    <property type="molecule type" value="Genomic_DNA"/>
</dbReference>
<dbReference type="EMBL" id="AE014296">
    <property type="protein sequence ID" value="AAN11773.1"/>
    <property type="molecule type" value="Genomic_DNA"/>
</dbReference>
<dbReference type="EMBL" id="AE014296">
    <property type="protein sequence ID" value="AAN11774.1"/>
    <property type="molecule type" value="Genomic_DNA"/>
</dbReference>
<dbReference type="EMBL" id="AY095048">
    <property type="protein sequence ID" value="AAM11376.1"/>
    <property type="molecule type" value="mRNA"/>
</dbReference>
<dbReference type="EMBL" id="BT009972">
    <property type="protein sequence ID" value="AAQ22441.1"/>
    <property type="molecule type" value="mRNA"/>
</dbReference>
<dbReference type="PIR" id="A42091">
    <property type="entry name" value="A42091"/>
</dbReference>
<dbReference type="RefSeq" id="NP_536745.4">
    <molecule id="P25439-2"/>
    <property type="nucleotide sequence ID" value="NM_080497.5"/>
</dbReference>
<dbReference type="RefSeq" id="NP_536746.1">
    <molecule id="P25439-1"/>
    <property type="nucleotide sequence ID" value="NM_080498.3"/>
</dbReference>
<dbReference type="RefSeq" id="NP_730088.1">
    <molecule id="P25439-2"/>
    <property type="nucleotide sequence ID" value="NM_168640.2"/>
</dbReference>
<dbReference type="RefSeq" id="NP_730089.1">
    <molecule id="P25439-1"/>
    <property type="nucleotide sequence ID" value="NM_168641.1"/>
</dbReference>
<dbReference type="SMR" id="P25439"/>
<dbReference type="BioGRID" id="65055">
    <property type="interactions" value="114"/>
</dbReference>
<dbReference type="ComplexPortal" id="CPX-2346">
    <property type="entry name" value="Non-canonical BRAHMA-associated SWI/SNF ATP-dependent chromatin remodeling complex"/>
</dbReference>
<dbReference type="ComplexPortal" id="CPX-2383">
    <property type="entry name" value="Polybromo-containing BRAHMA associated proteins complex"/>
</dbReference>
<dbReference type="ComplexPortal" id="CPX-2746">
    <property type="entry name" value="Brahma SWI/SNF ATP-dependent chromatin remodeling complex"/>
</dbReference>
<dbReference type="DIP" id="DIP-36728N"/>
<dbReference type="FunCoup" id="P25439">
    <property type="interactions" value="1740"/>
</dbReference>
<dbReference type="IntAct" id="P25439">
    <property type="interactions" value="51"/>
</dbReference>
<dbReference type="MINT" id="P25439"/>
<dbReference type="STRING" id="7227.FBpp0303193"/>
<dbReference type="GlyGen" id="P25439">
    <property type="glycosylation" value="2 sites"/>
</dbReference>
<dbReference type="iPTMnet" id="P25439"/>
<dbReference type="PaxDb" id="7227-FBpp0305757"/>
<dbReference type="DNASU" id="39744"/>
<dbReference type="EnsemblMetazoa" id="FBtr0075523">
    <molecule id="P25439-2"/>
    <property type="protein sequence ID" value="FBpp0075278"/>
    <property type="gene ID" value="FBgn0000212"/>
</dbReference>
<dbReference type="EnsemblMetazoa" id="FBtr0075524">
    <molecule id="P25439-2"/>
    <property type="protein sequence ID" value="FBpp0075279"/>
    <property type="gene ID" value="FBgn0000212"/>
</dbReference>
<dbReference type="EnsemblMetazoa" id="FBtr0075525">
    <molecule id="P25439-1"/>
    <property type="protein sequence ID" value="FBpp0075280"/>
    <property type="gene ID" value="FBgn0000212"/>
</dbReference>
<dbReference type="EnsemblMetazoa" id="FBtr0075526">
    <molecule id="P25439-1"/>
    <property type="protein sequence ID" value="FBpp0075281"/>
    <property type="gene ID" value="FBgn0000212"/>
</dbReference>
<dbReference type="GeneID" id="39744"/>
<dbReference type="KEGG" id="dme:Dmel_CG5942"/>
<dbReference type="AGR" id="FB:FBgn0000212"/>
<dbReference type="CTD" id="39744"/>
<dbReference type="FlyBase" id="FBgn0000212">
    <property type="gene designation" value="brm"/>
</dbReference>
<dbReference type="VEuPathDB" id="VectorBase:FBgn0000212"/>
<dbReference type="eggNOG" id="KOG0386">
    <property type="taxonomic scope" value="Eukaryota"/>
</dbReference>
<dbReference type="GeneTree" id="ENSGT00940000154821"/>
<dbReference type="InParanoid" id="P25439"/>
<dbReference type="OMA" id="RMEIVQC"/>
<dbReference type="OrthoDB" id="6017at2759"/>
<dbReference type="PhylomeDB" id="P25439"/>
<dbReference type="Reactome" id="R-DME-1266695">
    <property type="pathway name" value="Interleukin-7 signaling"/>
</dbReference>
<dbReference type="Reactome" id="R-DME-3214858">
    <property type="pathway name" value="RMTs methylate histone arginines"/>
</dbReference>
<dbReference type="Reactome" id="R-DME-3247509">
    <property type="pathway name" value="Chromatin modifying enzymes"/>
</dbReference>
<dbReference type="Reactome" id="R-DME-8939243">
    <property type="pathway name" value="RUNX1 interacts with co-factors whose precise effect on RUNX1 targets is not known"/>
</dbReference>
<dbReference type="SignaLink" id="P25439"/>
<dbReference type="BioGRID-ORCS" id="39744">
    <property type="hits" value="0 hits in 3 CRISPR screens"/>
</dbReference>
<dbReference type="ChiTaRS" id="brm">
    <property type="organism name" value="fly"/>
</dbReference>
<dbReference type="GenomeRNAi" id="39744"/>
<dbReference type="PRO" id="PR:P25439"/>
<dbReference type="Proteomes" id="UP000000803">
    <property type="component" value="Chromosome 3L"/>
</dbReference>
<dbReference type="Bgee" id="FBgn0000212">
    <property type="expression patterns" value="Expressed in eye disc (Drosophila) and 162 other cell types or tissues"/>
</dbReference>
<dbReference type="ExpressionAtlas" id="P25439">
    <property type="expression patterns" value="baseline and differential"/>
</dbReference>
<dbReference type="GO" id="GO:0035060">
    <property type="term" value="C:brahma complex"/>
    <property type="evidence" value="ECO:0000314"/>
    <property type="project" value="FlyBase"/>
</dbReference>
<dbReference type="GO" id="GO:0000785">
    <property type="term" value="C:chromatin"/>
    <property type="evidence" value="ECO:0000318"/>
    <property type="project" value="GO_Central"/>
</dbReference>
<dbReference type="GO" id="GO:0005634">
    <property type="term" value="C:nucleus"/>
    <property type="evidence" value="ECO:0000314"/>
    <property type="project" value="FlyBase"/>
</dbReference>
<dbReference type="GO" id="GO:0005700">
    <property type="term" value="C:polytene chromosome"/>
    <property type="evidence" value="ECO:0000314"/>
    <property type="project" value="FlyBase"/>
</dbReference>
<dbReference type="GO" id="GO:0005524">
    <property type="term" value="F:ATP binding"/>
    <property type="evidence" value="ECO:0007669"/>
    <property type="project" value="UniProtKB-KW"/>
</dbReference>
<dbReference type="GO" id="GO:0016887">
    <property type="term" value="F:ATP hydrolysis activity"/>
    <property type="evidence" value="ECO:0000303"/>
    <property type="project" value="FlyBase"/>
</dbReference>
<dbReference type="GO" id="GO:0008094">
    <property type="term" value="F:ATP-dependent activity, acting on DNA"/>
    <property type="evidence" value="ECO:0000250"/>
    <property type="project" value="FlyBase"/>
</dbReference>
<dbReference type="GO" id="GO:0003682">
    <property type="term" value="F:chromatin binding"/>
    <property type="evidence" value="ECO:0000318"/>
    <property type="project" value="GO_Central"/>
</dbReference>
<dbReference type="GO" id="GO:0003677">
    <property type="term" value="F:DNA binding"/>
    <property type="evidence" value="ECO:0000318"/>
    <property type="project" value="GO_Central"/>
</dbReference>
<dbReference type="GO" id="GO:0140297">
    <property type="term" value="F:DNA-binding transcription factor binding"/>
    <property type="evidence" value="ECO:0000353"/>
    <property type="project" value="FlyBase"/>
</dbReference>
<dbReference type="GO" id="GO:0004386">
    <property type="term" value="F:helicase activity"/>
    <property type="evidence" value="ECO:0007669"/>
    <property type="project" value="UniProtKB-KW"/>
</dbReference>
<dbReference type="GO" id="GO:0042393">
    <property type="term" value="F:histone binding"/>
    <property type="evidence" value="ECO:0007669"/>
    <property type="project" value="InterPro"/>
</dbReference>
<dbReference type="GO" id="GO:0140566">
    <property type="term" value="F:histone reader activity"/>
    <property type="evidence" value="ECO:0000353"/>
    <property type="project" value="FlyBase"/>
</dbReference>
<dbReference type="GO" id="GO:0140750">
    <property type="term" value="F:nucleosome array spacer activity"/>
    <property type="evidence" value="ECO:0000318"/>
    <property type="project" value="GO_Central"/>
</dbReference>
<dbReference type="GO" id="GO:0001223">
    <property type="term" value="F:transcription coactivator binding"/>
    <property type="evidence" value="ECO:0000353"/>
    <property type="project" value="FlyBase"/>
</dbReference>
<dbReference type="GO" id="GO:0007409">
    <property type="term" value="P:axonogenesis"/>
    <property type="evidence" value="ECO:0000315"/>
    <property type="project" value="FlyBase"/>
</dbReference>
<dbReference type="GO" id="GO:0043697">
    <property type="term" value="P:cell dedifferentiation"/>
    <property type="evidence" value="ECO:0000316"/>
    <property type="project" value="UniProtKB"/>
</dbReference>
<dbReference type="GO" id="GO:0006338">
    <property type="term" value="P:chromatin remodeling"/>
    <property type="evidence" value="ECO:0000314"/>
    <property type="project" value="FlyBase"/>
</dbReference>
<dbReference type="GO" id="GO:0070983">
    <property type="term" value="P:dendrite guidance"/>
    <property type="evidence" value="ECO:0000315"/>
    <property type="project" value="FlyBase"/>
</dbReference>
<dbReference type="GO" id="GO:0048813">
    <property type="term" value="P:dendrite morphogenesis"/>
    <property type="evidence" value="ECO:0000315"/>
    <property type="project" value="FlyBase"/>
</dbReference>
<dbReference type="GO" id="GO:0035172">
    <property type="term" value="P:hemocyte proliferation"/>
    <property type="evidence" value="ECO:0000304"/>
    <property type="project" value="FlyBase"/>
</dbReference>
<dbReference type="GO" id="GO:0008587">
    <property type="term" value="P:imaginal disc-derived wing margin morphogenesis"/>
    <property type="evidence" value="ECO:0000315"/>
    <property type="project" value="FlyBase"/>
</dbReference>
<dbReference type="GO" id="GO:0008586">
    <property type="term" value="P:imaginal disc-derived wing vein morphogenesis"/>
    <property type="evidence" value="ECO:0000315"/>
    <property type="project" value="FlyBase"/>
</dbReference>
<dbReference type="GO" id="GO:0007474">
    <property type="term" value="P:imaginal disc-derived wing vein specification"/>
    <property type="evidence" value="ECO:0000315"/>
    <property type="project" value="FlyBase"/>
</dbReference>
<dbReference type="GO" id="GO:0036335">
    <property type="term" value="P:intestinal stem cell homeostasis"/>
    <property type="evidence" value="ECO:0000315"/>
    <property type="project" value="FlyBase"/>
</dbReference>
<dbReference type="GO" id="GO:2000134">
    <property type="term" value="P:negative regulation of G1/S transition of mitotic cell cycle"/>
    <property type="evidence" value="ECO:0000316"/>
    <property type="project" value="FlyBase"/>
</dbReference>
<dbReference type="GO" id="GO:0007406">
    <property type="term" value="P:negative regulation of neuroblast proliferation"/>
    <property type="evidence" value="ECO:0000315"/>
    <property type="project" value="UniProtKB"/>
</dbReference>
<dbReference type="GO" id="GO:0045893">
    <property type="term" value="P:positive regulation of DNA-templated transcription"/>
    <property type="evidence" value="ECO:0000314"/>
    <property type="project" value="FlyBase"/>
</dbReference>
<dbReference type="GO" id="GO:2000648">
    <property type="term" value="P:positive regulation of stem cell proliferation"/>
    <property type="evidence" value="ECO:0000315"/>
    <property type="project" value="FlyBase"/>
</dbReference>
<dbReference type="GO" id="GO:0045944">
    <property type="term" value="P:positive regulation of transcription by RNA polymerase II"/>
    <property type="evidence" value="ECO:0000318"/>
    <property type="project" value="GO_Central"/>
</dbReference>
<dbReference type="GO" id="GO:0045088">
    <property type="term" value="P:regulation of innate immune response"/>
    <property type="evidence" value="ECO:0000315"/>
    <property type="project" value="FlyBase"/>
</dbReference>
<dbReference type="GO" id="GO:1902692">
    <property type="term" value="P:regulation of neuroblast proliferation"/>
    <property type="evidence" value="ECO:0000316"/>
    <property type="project" value="UniProtKB"/>
</dbReference>
<dbReference type="GO" id="GO:0006357">
    <property type="term" value="P:regulation of transcription by RNA polymerase II"/>
    <property type="evidence" value="ECO:0000315"/>
    <property type="project" value="FlyBase"/>
</dbReference>
<dbReference type="GO" id="GO:0045815">
    <property type="term" value="P:transcription initiation-coupled chromatin remodeling"/>
    <property type="evidence" value="ECO:0000315"/>
    <property type="project" value="FlyBase"/>
</dbReference>
<dbReference type="GO" id="GO:0007419">
    <property type="term" value="P:ventral cord development"/>
    <property type="evidence" value="ECO:0007001"/>
    <property type="project" value="FlyBase"/>
</dbReference>
<dbReference type="CDD" id="cd05516">
    <property type="entry name" value="Bromo_SNF2L2"/>
    <property type="match status" value="1"/>
</dbReference>
<dbReference type="CDD" id="cd17996">
    <property type="entry name" value="DEXHc_SMARCA2_SMARCA4"/>
    <property type="match status" value="1"/>
</dbReference>
<dbReference type="CDD" id="cd18793">
    <property type="entry name" value="SF2_C_SNF"/>
    <property type="match status" value="1"/>
</dbReference>
<dbReference type="FunFam" id="1.20.920.10:FF:000041">
    <property type="entry name" value="ATP-dependent helicase brm"/>
    <property type="match status" value="1"/>
</dbReference>
<dbReference type="FunFam" id="3.40.5.120:FF:000006">
    <property type="entry name" value="Brahma, isoform F"/>
    <property type="match status" value="1"/>
</dbReference>
<dbReference type="FunFam" id="3.40.50.10810:FF:000008">
    <property type="entry name" value="Chromatin structure-remodeling complex subunit snf21"/>
    <property type="match status" value="1"/>
</dbReference>
<dbReference type="FunFam" id="1.20.5.170:FF:000008">
    <property type="entry name" value="probable global transcription activator SNF2L2 isoform X1"/>
    <property type="match status" value="1"/>
</dbReference>
<dbReference type="FunFam" id="3.40.50.300:FF:003020">
    <property type="entry name" value="SNF2-related domain-containing protein"/>
    <property type="match status" value="1"/>
</dbReference>
<dbReference type="Gene3D" id="1.20.5.170">
    <property type="match status" value="1"/>
</dbReference>
<dbReference type="Gene3D" id="3.40.5.120">
    <property type="match status" value="1"/>
</dbReference>
<dbReference type="Gene3D" id="1.20.920.10">
    <property type="entry name" value="Bromodomain-like"/>
    <property type="match status" value="1"/>
</dbReference>
<dbReference type="Gene3D" id="3.40.50.300">
    <property type="entry name" value="P-loop containing nucleotide triphosphate hydrolases"/>
    <property type="match status" value="1"/>
</dbReference>
<dbReference type="Gene3D" id="3.40.50.10810">
    <property type="entry name" value="Tandem AAA-ATPase domain"/>
    <property type="match status" value="1"/>
</dbReference>
<dbReference type="InterPro" id="IPR006576">
    <property type="entry name" value="BRK_domain"/>
</dbReference>
<dbReference type="InterPro" id="IPR037259">
    <property type="entry name" value="BRK_sf"/>
</dbReference>
<dbReference type="InterPro" id="IPR001487">
    <property type="entry name" value="Bromodomain"/>
</dbReference>
<dbReference type="InterPro" id="IPR036427">
    <property type="entry name" value="Bromodomain-like_sf"/>
</dbReference>
<dbReference type="InterPro" id="IPR018359">
    <property type="entry name" value="Bromodomain_CS"/>
</dbReference>
<dbReference type="InterPro" id="IPR014978">
    <property type="entry name" value="Gln-Leu-Gln_QLQ"/>
</dbReference>
<dbReference type="InterPro" id="IPR014001">
    <property type="entry name" value="Helicase_ATP-bd"/>
</dbReference>
<dbReference type="InterPro" id="IPR001650">
    <property type="entry name" value="Helicase_C-like"/>
</dbReference>
<dbReference type="InterPro" id="IPR014012">
    <property type="entry name" value="HSA_dom"/>
</dbReference>
<dbReference type="InterPro" id="IPR027417">
    <property type="entry name" value="P-loop_NTPase"/>
</dbReference>
<dbReference type="InterPro" id="IPR029295">
    <property type="entry name" value="SnAC"/>
</dbReference>
<dbReference type="InterPro" id="IPR038718">
    <property type="entry name" value="SNF2-like_sf"/>
</dbReference>
<dbReference type="InterPro" id="IPR049730">
    <property type="entry name" value="SNF2/RAD54-like_C"/>
</dbReference>
<dbReference type="InterPro" id="IPR000330">
    <property type="entry name" value="SNF2_N"/>
</dbReference>
<dbReference type="PANTHER" id="PTHR10799">
    <property type="entry name" value="SNF2/RAD54 HELICASE FAMILY"/>
    <property type="match status" value="1"/>
</dbReference>
<dbReference type="Pfam" id="PF07533">
    <property type="entry name" value="BRK"/>
    <property type="match status" value="1"/>
</dbReference>
<dbReference type="Pfam" id="PF00439">
    <property type="entry name" value="Bromodomain"/>
    <property type="match status" value="1"/>
</dbReference>
<dbReference type="Pfam" id="PF00271">
    <property type="entry name" value="Helicase_C"/>
    <property type="match status" value="1"/>
</dbReference>
<dbReference type="Pfam" id="PF07529">
    <property type="entry name" value="HSA"/>
    <property type="match status" value="1"/>
</dbReference>
<dbReference type="Pfam" id="PF08880">
    <property type="entry name" value="QLQ"/>
    <property type="match status" value="1"/>
</dbReference>
<dbReference type="Pfam" id="PF14619">
    <property type="entry name" value="SnAC"/>
    <property type="match status" value="1"/>
</dbReference>
<dbReference type="Pfam" id="PF00176">
    <property type="entry name" value="SNF2-rel_dom"/>
    <property type="match status" value="1"/>
</dbReference>
<dbReference type="PRINTS" id="PR00503">
    <property type="entry name" value="BROMODOMAIN"/>
</dbReference>
<dbReference type="SMART" id="SM00592">
    <property type="entry name" value="BRK"/>
    <property type="match status" value="1"/>
</dbReference>
<dbReference type="SMART" id="SM00297">
    <property type="entry name" value="BROMO"/>
    <property type="match status" value="1"/>
</dbReference>
<dbReference type="SMART" id="SM00487">
    <property type="entry name" value="DEXDc"/>
    <property type="match status" value="1"/>
</dbReference>
<dbReference type="SMART" id="SM00490">
    <property type="entry name" value="HELICc"/>
    <property type="match status" value="1"/>
</dbReference>
<dbReference type="SMART" id="SM00573">
    <property type="entry name" value="HSA"/>
    <property type="match status" value="1"/>
</dbReference>
<dbReference type="SMART" id="SM00951">
    <property type="entry name" value="QLQ"/>
    <property type="match status" value="1"/>
</dbReference>
<dbReference type="SMART" id="SM01314">
    <property type="entry name" value="SnAC"/>
    <property type="match status" value="1"/>
</dbReference>
<dbReference type="SUPFAM" id="SSF81995">
    <property type="entry name" value="beta-sandwich domain of Sec23/24"/>
    <property type="match status" value="1"/>
</dbReference>
<dbReference type="SUPFAM" id="SSF160481">
    <property type="entry name" value="BRK domain-like"/>
    <property type="match status" value="1"/>
</dbReference>
<dbReference type="SUPFAM" id="SSF47370">
    <property type="entry name" value="Bromodomain"/>
    <property type="match status" value="1"/>
</dbReference>
<dbReference type="SUPFAM" id="SSF52540">
    <property type="entry name" value="P-loop containing nucleoside triphosphate hydrolases"/>
    <property type="match status" value="2"/>
</dbReference>
<dbReference type="PROSITE" id="PS00633">
    <property type="entry name" value="BROMODOMAIN_1"/>
    <property type="match status" value="1"/>
</dbReference>
<dbReference type="PROSITE" id="PS50014">
    <property type="entry name" value="BROMODOMAIN_2"/>
    <property type="match status" value="1"/>
</dbReference>
<dbReference type="PROSITE" id="PS51192">
    <property type="entry name" value="HELICASE_ATP_BIND_1"/>
    <property type="match status" value="1"/>
</dbReference>
<dbReference type="PROSITE" id="PS51194">
    <property type="entry name" value="HELICASE_CTER"/>
    <property type="match status" value="1"/>
</dbReference>
<dbReference type="PROSITE" id="PS51204">
    <property type="entry name" value="HSA"/>
    <property type="match status" value="1"/>
</dbReference>
<dbReference type="PROSITE" id="PS51666">
    <property type="entry name" value="QLQ"/>
    <property type="match status" value="1"/>
</dbReference>
<gene>
    <name type="primary">brm</name>
    <name type="ORF">CG5942</name>
</gene>
<proteinExistence type="evidence at protein level"/>
<organism>
    <name type="scientific">Drosophila melanogaster</name>
    <name type="common">Fruit fly</name>
    <dbReference type="NCBI Taxonomy" id="7227"/>
    <lineage>
        <taxon>Eukaryota</taxon>
        <taxon>Metazoa</taxon>
        <taxon>Ecdysozoa</taxon>
        <taxon>Arthropoda</taxon>
        <taxon>Hexapoda</taxon>
        <taxon>Insecta</taxon>
        <taxon>Pterygota</taxon>
        <taxon>Neoptera</taxon>
        <taxon>Endopterygota</taxon>
        <taxon>Diptera</taxon>
        <taxon>Brachycera</taxon>
        <taxon>Muscomorpha</taxon>
        <taxon>Ephydroidea</taxon>
        <taxon>Drosophilidae</taxon>
        <taxon>Drosophila</taxon>
        <taxon>Sophophora</taxon>
    </lineage>
</organism>
<feature type="chain" id="PRO_0000074310" description="ATP-dependent helicase brm">
    <location>
        <begin position="1"/>
        <end position="1638"/>
    </location>
</feature>
<feature type="domain" description="QLQ" evidence="5">
    <location>
        <begin position="173"/>
        <end position="208"/>
    </location>
</feature>
<feature type="domain" description="HSA" evidence="4">
    <location>
        <begin position="501"/>
        <end position="573"/>
    </location>
</feature>
<feature type="domain" description="Helicase ATP-binding" evidence="2">
    <location>
        <begin position="785"/>
        <end position="950"/>
    </location>
</feature>
<feature type="domain" description="Helicase C-terminal" evidence="3">
    <location>
        <begin position="1102"/>
        <end position="1263"/>
    </location>
</feature>
<feature type="domain" description="Bromo" evidence="1">
    <location>
        <begin position="1425"/>
        <end position="1530"/>
    </location>
</feature>
<feature type="region of interest" description="Disordered" evidence="6">
    <location>
        <begin position="1"/>
        <end position="137"/>
    </location>
</feature>
<feature type="region of interest" description="Disordered" evidence="6">
    <location>
        <begin position="201"/>
        <end position="387"/>
    </location>
</feature>
<feature type="region of interest" description="Disordered" evidence="6">
    <location>
        <begin position="691"/>
        <end position="730"/>
    </location>
</feature>
<feature type="region of interest" description="Disordered" evidence="6">
    <location>
        <begin position="1380"/>
        <end position="1412"/>
    </location>
</feature>
<feature type="region of interest" description="Disordered" evidence="6">
    <location>
        <begin position="1544"/>
        <end position="1578"/>
    </location>
</feature>
<feature type="region of interest" description="Disordered" evidence="6">
    <location>
        <begin position="1592"/>
        <end position="1638"/>
    </location>
</feature>
<feature type="short sequence motif" description="DEGH box">
    <location>
        <begin position="900"/>
        <end position="903"/>
    </location>
</feature>
<feature type="compositionally biased region" description="Pro residues" evidence="6">
    <location>
        <begin position="7"/>
        <end position="51"/>
    </location>
</feature>
<feature type="compositionally biased region" description="Low complexity" evidence="6">
    <location>
        <begin position="52"/>
        <end position="63"/>
    </location>
</feature>
<feature type="compositionally biased region" description="Pro residues" evidence="6">
    <location>
        <begin position="121"/>
        <end position="131"/>
    </location>
</feature>
<feature type="compositionally biased region" description="Low complexity" evidence="6">
    <location>
        <begin position="201"/>
        <end position="211"/>
    </location>
</feature>
<feature type="compositionally biased region" description="Pro residues" evidence="6">
    <location>
        <begin position="212"/>
        <end position="231"/>
    </location>
</feature>
<feature type="compositionally biased region" description="Pro residues" evidence="6">
    <location>
        <begin position="238"/>
        <end position="253"/>
    </location>
</feature>
<feature type="compositionally biased region" description="Pro residues" evidence="6">
    <location>
        <begin position="263"/>
        <end position="272"/>
    </location>
</feature>
<feature type="compositionally biased region" description="Pro residues" evidence="6">
    <location>
        <begin position="279"/>
        <end position="304"/>
    </location>
</feature>
<feature type="compositionally biased region" description="Low complexity" evidence="6">
    <location>
        <begin position="305"/>
        <end position="317"/>
    </location>
</feature>
<feature type="compositionally biased region" description="Low complexity" evidence="6">
    <location>
        <begin position="365"/>
        <end position="382"/>
    </location>
</feature>
<feature type="compositionally biased region" description="Basic and acidic residues" evidence="6">
    <location>
        <begin position="699"/>
        <end position="708"/>
    </location>
</feature>
<feature type="compositionally biased region" description="Polar residues" evidence="6">
    <location>
        <begin position="710"/>
        <end position="724"/>
    </location>
</feature>
<feature type="compositionally biased region" description="Acidic residues" evidence="6">
    <location>
        <begin position="1380"/>
        <end position="1391"/>
    </location>
</feature>
<feature type="compositionally biased region" description="Acidic residues" evidence="6">
    <location>
        <begin position="1557"/>
        <end position="1574"/>
    </location>
</feature>
<feature type="compositionally biased region" description="Low complexity" evidence="6">
    <location>
        <begin position="1592"/>
        <end position="1604"/>
    </location>
</feature>
<feature type="compositionally biased region" description="Basic residues" evidence="6">
    <location>
        <begin position="1616"/>
        <end position="1625"/>
    </location>
</feature>
<feature type="binding site" evidence="2">
    <location>
        <begin position="798"/>
        <end position="805"/>
    </location>
    <ligand>
        <name>ATP</name>
        <dbReference type="ChEBI" id="CHEBI:30616"/>
    </ligand>
</feature>
<feature type="modified residue" description="Phosphoserine" evidence="11">
    <location>
        <position position="695"/>
    </location>
</feature>
<feature type="modified residue" description="Phosphoserine" evidence="11">
    <location>
        <position position="698"/>
    </location>
</feature>
<feature type="modified residue" description="Phosphoserine" evidence="11">
    <location>
        <position position="1407"/>
    </location>
</feature>
<feature type="modified residue" description="Phosphoserine" evidence="11">
    <location>
        <position position="1411"/>
    </location>
</feature>
<feature type="modified residue" description="Phosphoserine" evidence="11">
    <location>
        <position position="1591"/>
    </location>
</feature>
<feature type="modified residue" description="Phosphoserine" evidence="11">
    <location>
        <position position="1594"/>
    </location>
</feature>
<feature type="splice variant" id="VSP_000555" description="In isoform C." evidence="13">
    <original>IFSKG</original>
    <variation>S</variation>
    <location>
        <begin position="81"/>
        <end position="85"/>
    </location>
</feature>
<feature type="sequence conflict" description="In Ref. 1; AAA19661." evidence="14" ref="1">
    <original>D</original>
    <variation>Y</variation>
    <location>
        <position position="687"/>
    </location>
</feature>
<sequence>MASPSPANSPMPPPQAPSPMAPPSQSPAPSPHSPYPHQQPGPLQGPPPPGHPGAYGHPMQHGPPGQGPPGHHMPPHHQGMIFSKGPHMGMQMPPTGPNMSPYQTHGMPPNAPTQPCIVSPGGPPGGPPPPERSSQENLHALQRAIDSMEEKGLQEDPRYSQLLAMRATSKHQHLNGNQVNLLRTQITAYRLLARNKPISMQMQQALQAAQQQPPPGPPIGPPGAPGGPPPGSQHAGQPPVPPQQQQQPPPSAGTPPQCSTPPASNPYGPPVPGQKMQVAPPPPHMQQGQPLPPQPPQVGGPPPIQQQQPPQQQQQQSQPPPPEPHQHQLPNGGKPLSMGPSGGQPLIPSSPMQPQVRGTLPGMPPGSQVPQPGGGPQRQVPPAGMPMPKPNRITTVAKPVGLDPITLLQERENRIAARISLRMQELQRLPATMSEDLRLQAAIELRALRVLNFQRQLRMEFVQCTRRDTTLETALNIKLYKRTKRQGLREARATEKLEKQQKLEAERKRRQKHLEFLAAVLQHGKDLREFHRNNKAQLARMNKAVMNHHANAEREQKKEQERIEKERMRRLMAEDEEGYRKLIDQKKDKRLAFLLSQTDEYISNLTQMVKQHKDDQMKKKEEEGKRLIQFKKELLMSGEYIGIDEGSIVADMRVHVVEQCTGKKLTGDDAPMLKHLHRWLNMHPGWDWIDDEEDSCGSNDDHKPKVEEQPTATEDATDKAQATGNDEDAKDLITKAKVEDDEYRTEEQTYYSIAHTIHEKVVEQASIMVNGTLKEYQIKGLEWLVSLYNNNLNGILADEMGLGKTIQTISLVTYLMDRKKVMGPYLIIVPLSTLPNWVLEFEKWAPAVGVVSYKGSPQGRRLLQNQMRATKFNVLLTTYEYVIKDKAVLAKIQWKYMIIDEGHRMKNHHCKLTQVLNTHYIAPYRLLLTGTPLQNKLPELWALLNFLLPSIFKSCSTFEQWFNAPFATTGEKVELNEEETILIIRRLHKVLRPFLLRRLKKEVEHQLPDKVEYIIKCDMSALQRVLYKHMQSKGVLLTDGSEKGKHGKGGAKALMNTIVQLRKLCNHPFMFQHIEEKYCDHTGGHGVVSGPDLYRVSGKFELLDRILPKLKATNHRVLLFCQMTQCMTIIEDYLGWRQFGYLRLDGTTKAEDRGELLRKFNAKGSDVFVFLLSTRAGGLGLNLQTADTVVIFDSDWNPHQDLQAQDRAHRIGQRNEVRVLRLMTVNSVEERILAAARYKLNMDEKVIQAGMFDQKSTGSERQQFLQTILHQDDNEEEEENEVPDDEMINMMIARSEEEIEIFKRMDAERKKEDEEIHPGRERLIDESELPDWLTKDDDEVERFHYQYDEDTILGRGSRQRKEVDYTDSLTEKEWLKAIDDGAEFDEEEEEDDSKRKRRKRKNRKEESDDDSLILKRRRRQNLDKRSKKQMHKIMSAVIKHNQDGRTLSEPFMKLPSRQRLPDYYEIIKRPVDIKKILQRIEDCKYADLNELEKDFMQLCQNAQIYNEEASLIYLDSIALQKVFVGARQRITAAADAAAVAAGDNTGEAHGNGGSDNSDNDDDDGGDDGSDDEEIATTSAAAVKMKLKLNKSLASAPATPTQSSSNVSSGAATTSKKQTRRKRSQKKYTISDDDDDDMD</sequence>